<organism>
    <name type="scientific">Mus musculus</name>
    <name type="common">Mouse</name>
    <dbReference type="NCBI Taxonomy" id="10090"/>
    <lineage>
        <taxon>Eukaryota</taxon>
        <taxon>Metazoa</taxon>
        <taxon>Chordata</taxon>
        <taxon>Craniata</taxon>
        <taxon>Vertebrata</taxon>
        <taxon>Euteleostomi</taxon>
        <taxon>Mammalia</taxon>
        <taxon>Eutheria</taxon>
        <taxon>Euarchontoglires</taxon>
        <taxon>Glires</taxon>
        <taxon>Rodentia</taxon>
        <taxon>Myomorpha</taxon>
        <taxon>Muroidea</taxon>
        <taxon>Muridae</taxon>
        <taxon>Murinae</taxon>
        <taxon>Mus</taxon>
        <taxon>Mus</taxon>
    </lineage>
</organism>
<gene>
    <name type="primary">Bglap2</name>
</gene>
<reference key="1">
    <citation type="journal article" date="1986" name="EMBO J.">
        <title>Isolation of the human gene for bone gla protein utilizing mouse and rat cDNA clones.</title>
        <authorList>
            <person name="Celeste A.J."/>
            <person name="Buecker J.L."/>
            <person name="Kriz R."/>
            <person name="Wang E.A."/>
            <person name="Wozney J.M."/>
        </authorList>
    </citation>
    <scope>NUCLEOTIDE SEQUENCE [MRNA]</scope>
</reference>
<reference key="2">
    <citation type="journal article" date="1993" name="Endocrinology">
        <title>Multiple copies of the bone-specific osteocalcin gene in mouse and rat.</title>
        <authorList>
            <person name="Rahman S."/>
            <person name="Oberdorf A."/>
            <person name="Montecino M."/>
            <person name="Tanhauser S.M."/>
            <person name="Lian J.B."/>
            <person name="Stein G.S."/>
            <person name="Laipis P.J."/>
            <person name="Stein J.L."/>
        </authorList>
    </citation>
    <scope>NUCLEOTIDE SEQUENCE [GENOMIC DNA]</scope>
</reference>
<reference key="3">
    <citation type="journal article" date="1994" name="J. Biol. Chem.">
        <title>The mouse osteocalcin gene cluster contains three genes with two separate spatial and temporal patterns of expression.</title>
        <authorList>
            <person name="Desbois C."/>
            <person name="Hogue D.A."/>
            <person name="Karsenty G."/>
        </authorList>
    </citation>
    <scope>NUCLEOTIDE SEQUENCE [GENOMIC DNA]</scope>
</reference>
<reference key="4">
    <citation type="journal article" date="2009" name="PLoS Biol.">
        <title>Lineage-specific biology revealed by a finished genome assembly of the mouse.</title>
        <authorList>
            <person name="Church D.M."/>
            <person name="Goodstadt L."/>
            <person name="Hillier L.W."/>
            <person name="Zody M.C."/>
            <person name="Goldstein S."/>
            <person name="She X."/>
            <person name="Bult C.J."/>
            <person name="Agarwala R."/>
            <person name="Cherry J.L."/>
            <person name="DiCuccio M."/>
            <person name="Hlavina W."/>
            <person name="Kapustin Y."/>
            <person name="Meric P."/>
            <person name="Maglott D."/>
            <person name="Birtle Z."/>
            <person name="Marques A.C."/>
            <person name="Graves T."/>
            <person name="Zhou S."/>
            <person name="Teague B."/>
            <person name="Potamousis K."/>
            <person name="Churas C."/>
            <person name="Place M."/>
            <person name="Herschleb J."/>
            <person name="Runnheim R."/>
            <person name="Forrest D."/>
            <person name="Amos-Landgraf J."/>
            <person name="Schwartz D.C."/>
            <person name="Cheng Z."/>
            <person name="Lindblad-Toh K."/>
            <person name="Eichler E.E."/>
            <person name="Ponting C.P."/>
        </authorList>
    </citation>
    <scope>NUCLEOTIDE SEQUENCE [LARGE SCALE GENOMIC DNA]</scope>
    <source>
        <strain>C57BL/6J</strain>
    </source>
</reference>
<reference key="5">
    <citation type="journal article" date="1996" name="Nature">
        <title>Increased bone formation in osteocalcin-deficient mice.</title>
        <authorList>
            <person name="Ducy P."/>
            <person name="Desbois C."/>
            <person name="Boyce B."/>
            <person name="Pinero G."/>
            <person name="Story B."/>
            <person name="Dunstan C."/>
            <person name="Smith E."/>
            <person name="Bonadio J."/>
            <person name="Goldstein S."/>
            <person name="Gundberg C."/>
            <person name="Bradley A."/>
            <person name="Karsenty G."/>
        </authorList>
    </citation>
    <scope>FUNCTION</scope>
    <scope>DISRUPTION PHENOTYPE</scope>
</reference>
<reference key="6">
    <citation type="journal article" date="2007" name="Cell">
        <title>Endocrine regulation of energy metabolism by the skeleton.</title>
        <authorList>
            <person name="Lee N.K."/>
            <person name="Sowa H."/>
            <person name="Hinoi E."/>
            <person name="Ferron M."/>
            <person name="Ahn J.D."/>
            <person name="Confavreux C."/>
            <person name="Dacquin R."/>
            <person name="Mee P.J."/>
            <person name="McKee M.D."/>
            <person name="Jung D.Y."/>
            <person name="Zhang Z."/>
            <person name="Kim J.K."/>
            <person name="Mauvais-Jarvis F."/>
            <person name="Ducy P."/>
            <person name="Karsenty G."/>
        </authorList>
    </citation>
    <scope>FUNCTION</scope>
    <scope>SUBCELLULAR LOCATION</scope>
    <scope>GAMMA-CARBOXYGLUTAMATION</scope>
</reference>
<reference key="7">
    <citation type="journal article" date="2010" name="Cell">
        <title>Insulin signaling in osteoblasts integrates bone remodeling and energy metabolism.</title>
        <authorList>
            <person name="Ferron M."/>
            <person name="Wei J."/>
            <person name="Yoshizawa T."/>
            <person name="Del Fattore A."/>
            <person name="DePinho R.A."/>
            <person name="Teti A."/>
            <person name="Ducy P."/>
            <person name="Karsenty G."/>
        </authorList>
    </citation>
    <scope>FUNCTION</scope>
    <scope>SUBCELLULAR LOCATION</scope>
    <scope>GAMMA-CARBOXYGLUTAMATION</scope>
</reference>
<reference key="8">
    <citation type="journal article" date="2010" name="Cell">
        <title>Insulin receptor signaling in osteoblasts regulates postnatal bone acquisition and body composition.</title>
        <authorList>
            <person name="Fulzele K."/>
            <person name="Riddle R.C."/>
            <person name="DiGirolamo D.J."/>
            <person name="Cao X."/>
            <person name="Wan C."/>
            <person name="Chen D."/>
            <person name="Faugere M.C."/>
            <person name="Aja S."/>
            <person name="Hussain M.A."/>
            <person name="Bruening J.C."/>
            <person name="Clemens T.L."/>
        </authorList>
    </citation>
    <scope>FUNCTION</scope>
    <scope>SUBCELLULAR LOCATION</scope>
    <scope>GAMMA-CARBOXYGLUTAMATION</scope>
</reference>
<reference key="9">
    <citation type="journal article" date="2011" name="Cell">
        <title>Endocrine regulation of male fertility by the skeleton.</title>
        <authorList>
            <person name="Oury F."/>
            <person name="Sumara G."/>
            <person name="Sumara O."/>
            <person name="Ferron M."/>
            <person name="Chang H."/>
            <person name="Smith C.E."/>
            <person name="Hermo L."/>
            <person name="Suarez S."/>
            <person name="Roth B.L."/>
            <person name="Ducy P."/>
            <person name="Karsenty G."/>
        </authorList>
    </citation>
    <scope>FUNCTION</scope>
    <scope>SUBCELLULAR LOCATION</scope>
    <scope>GAMMA-CARBOXYGLUTAMATION</scope>
</reference>
<reference key="10">
    <citation type="journal article" date="2013" name="Cell">
        <title>Maternal and offspring pools of osteocalcin influence brain development and functions.</title>
        <authorList>
            <person name="Oury F."/>
            <person name="Khrimian L."/>
            <person name="Denny C.A."/>
            <person name="Gardin A."/>
            <person name="Chamouni A."/>
            <person name="Goeden N."/>
            <person name="Huang Y.Y."/>
            <person name="Lee H."/>
            <person name="Srinivas P."/>
            <person name="Gao X.B."/>
            <person name="Suyama S."/>
            <person name="Langer T."/>
            <person name="Mann J.J."/>
            <person name="Horvath T.L."/>
            <person name="Bonnin A."/>
            <person name="Karsenty G."/>
        </authorList>
    </citation>
    <scope>FUNCTION</scope>
    <scope>SUBCELLULAR LOCATION</scope>
    <scope>GAMMA-CARBOXYGLUTAMATION</scope>
    <scope>DISRUPTION PHENOTYPE</scope>
</reference>
<reference key="11">
    <citation type="journal article" date="2017" name="J. Exp. Med.">
        <title>Gpr158 mediates osteocalcin's regulation of cognition.</title>
        <authorList>
            <person name="Khrimian L."/>
            <person name="Obri A."/>
            <person name="Ramos-Brossier M."/>
            <person name="Rousseaud A."/>
            <person name="Moriceau S."/>
            <person name="Nicot A.S."/>
            <person name="Mera P."/>
            <person name="Kosmidis S."/>
            <person name="Karnavas T."/>
            <person name="Saudou F."/>
            <person name="Gao X.B."/>
            <person name="Oury F."/>
            <person name="Kandel E."/>
            <person name="Karsenty G."/>
        </authorList>
    </citation>
    <scope>FUNCTION</scope>
</reference>
<comment type="function">
    <text evidence="4 11">The carboxylated form is one of the main organic components of the bone matrix, which constitutes 1-2% of the total bone protein: it acts as a negative regulator of bone formation and is required to limit bone formation without impairing bone resorption or mineralization (PubMed:8684484). The carboxylated form binds strongly to apatite and calcium (PubMed:17693256).</text>
</comment>
<comment type="function">
    <text evidence="4 5 6 7 8 9">The uncarboxylated form acts as a hormone secreted by osteoblasts, which regulates different cellular processes, such as energy metabolism, male fertility and brain development (PubMed:17693256, PubMed:20655470, PubMed:20655471, PubMed:21333348, PubMed:24074871). Regulates of energy metabolism by acting as a hormone favoring pancreatic beta-cell proliferation, insulin secretion and sensitivity and energy expenditure (PubMed:17693256, PubMed:20655470, PubMed:20655471). Uncarboxylated osteocalcin hormone also promotes testosterone production in the testes: acts as a ligand for G protein-coupled receptor GPRC6A at the surface of Leydig cells, initiating a signaling response that promotes the expression of enzymes required for testosterone synthesis in a CREB-dependent manner (PubMed:21333348). Also acts as a regulator of brain development: osteocalcin hormone crosses the blood-brain barrier and acts as a ligand for GPR158 on neurons, initiating a signaling response that prevents neuronal apoptosis in the hippocampus, favors the synthesis of all monoamine neurotransmitters and inhibits that of gamma-aminobutyric acid (GABA) (PubMed:24074871, PubMed:28851741). Osteocalcin also crosses the placenta during pregnancy and maternal osteocalcin is required for fetal brain development (PubMed:24074871).</text>
</comment>
<comment type="subcellular location">
    <subcellularLocation>
        <location evidence="4 5 6 7 8">Secreted</location>
    </subcellularLocation>
</comment>
<comment type="tissue specificity">
    <text evidence="10">Bone.</text>
</comment>
<comment type="PTM">
    <text evidence="2 4 5 6 7 8">Gamma-carboxyglutamate residues are formed by vitamin K dependent carboxylation by GGCX (By similarity). These residues are essential for the binding of calcium (By similarity). Carboxylated in a Ptprv/Esp-dependent process (PubMed:17693256, PubMed:20655470, PubMed:20655471). Decarboxylation promotes the hormone activity (PubMed:17693256, PubMed:20655470, PubMed:20655471, PubMed:21333348, PubMed:24074871).</text>
</comment>
<comment type="disruption phenotype">
    <text evidence="7 8 11">Mice lacking Bglap and Bglap2 show increased bone formation, characterized by higher bone mass and bones of improved functional quality (PubMed:8684484). Mice lacking Bglap and Bglap2 also display reduced male fertility due to decreased testosterone production in the testes (PubMed:21333348). Mice lacking Bglap and Bglap2 are passive and show greater anxiety-like behaviors due to impaired synthesis of neurotransmitters (PubMed:24074871).</text>
</comment>
<comment type="similarity">
    <text evidence="13">Belongs to the osteocalcin/matrix Gla protein family.</text>
</comment>
<dbReference type="EMBL" id="X04142">
    <property type="protein sequence ID" value="CAA27762.1"/>
    <property type="molecule type" value="mRNA"/>
</dbReference>
<dbReference type="EMBL" id="S67455">
    <property type="protein sequence ID" value="AAB29145.1"/>
    <property type="molecule type" value="Genomic_DNA"/>
</dbReference>
<dbReference type="EMBL" id="L24429">
    <property type="protein sequence ID" value="AAA39854.1"/>
    <property type="molecule type" value="Genomic_DNA"/>
</dbReference>
<dbReference type="EMBL" id="AC102388">
    <property type="status" value="NOT_ANNOTATED_CDS"/>
    <property type="molecule type" value="Genomic_DNA"/>
</dbReference>
<dbReference type="CCDS" id="CCDS17473.1"/>
<dbReference type="PIR" id="B25471">
    <property type="entry name" value="B25471"/>
</dbReference>
<dbReference type="RefSeq" id="NP_001027469.2">
    <property type="nucleotide sequence ID" value="NM_001032298.3"/>
</dbReference>
<dbReference type="SMR" id="P86547"/>
<dbReference type="FunCoup" id="P86547">
    <property type="interactions" value="54"/>
</dbReference>
<dbReference type="STRING" id="10090.ENSMUSP00000096555"/>
<dbReference type="PaxDb" id="10090-ENSMUSP00000096555"/>
<dbReference type="DNASU" id="12097"/>
<dbReference type="Ensembl" id="ENSMUST00000098956.3">
    <property type="protein sequence ID" value="ENSMUSP00000096555.3"/>
    <property type="gene ID" value="ENSMUSG00000074486.3"/>
</dbReference>
<dbReference type="GeneID" id="12097"/>
<dbReference type="KEGG" id="mmu:12097"/>
<dbReference type="UCSC" id="uc008pux.1">
    <property type="organism name" value="mouse"/>
</dbReference>
<dbReference type="AGR" id="MGI:88157"/>
<dbReference type="CTD" id="12097"/>
<dbReference type="MGI" id="MGI:88157">
    <property type="gene designation" value="Bglap2"/>
</dbReference>
<dbReference type="VEuPathDB" id="HostDB:ENSMUSG00000074486"/>
<dbReference type="eggNOG" id="ENOG502S85I">
    <property type="taxonomic scope" value="Eukaryota"/>
</dbReference>
<dbReference type="GeneTree" id="ENSGT00410000026290"/>
<dbReference type="HOGENOM" id="CLU_160110_0_0_1"/>
<dbReference type="InParanoid" id="P86547"/>
<dbReference type="OMA" id="MDTEGII"/>
<dbReference type="OrthoDB" id="9950568at2759"/>
<dbReference type="PhylomeDB" id="P86547"/>
<dbReference type="TreeFam" id="TF330920"/>
<dbReference type="Reactome" id="R-MMU-159740">
    <property type="pathway name" value="Gamma-carboxylation of protein precursors"/>
</dbReference>
<dbReference type="Reactome" id="R-MMU-159763">
    <property type="pathway name" value="Transport of gamma-carboxylated protein precursors from the endoplasmic reticulum to the Golgi apparatus"/>
</dbReference>
<dbReference type="Reactome" id="R-MMU-159782">
    <property type="pathway name" value="Removal of aminoterminal propeptides from gamma-carboxylated proteins"/>
</dbReference>
<dbReference type="BioGRID-ORCS" id="12097">
    <property type="hits" value="3 hits in 39 CRISPR screens"/>
</dbReference>
<dbReference type="PRO" id="PR:P86547"/>
<dbReference type="Proteomes" id="UP000000589">
    <property type="component" value="Chromosome 3"/>
</dbReference>
<dbReference type="RNAct" id="P86547">
    <property type="molecule type" value="protein"/>
</dbReference>
<dbReference type="Bgee" id="ENSMUSG00000074486">
    <property type="expression patterns" value="Expressed in esophagus and 59 other cell types or tissues"/>
</dbReference>
<dbReference type="GO" id="GO:0005576">
    <property type="term" value="C:extracellular region"/>
    <property type="evidence" value="ECO:0000314"/>
    <property type="project" value="UniProtKB"/>
</dbReference>
<dbReference type="GO" id="GO:0005615">
    <property type="term" value="C:extracellular space"/>
    <property type="evidence" value="ECO:0000314"/>
    <property type="project" value="MGI"/>
</dbReference>
<dbReference type="GO" id="GO:0005509">
    <property type="term" value="F:calcium ion binding"/>
    <property type="evidence" value="ECO:0007669"/>
    <property type="project" value="InterPro"/>
</dbReference>
<dbReference type="GO" id="GO:0005179">
    <property type="term" value="F:hormone activity"/>
    <property type="evidence" value="ECO:0000314"/>
    <property type="project" value="UniProtKB"/>
</dbReference>
<dbReference type="GO" id="GO:0046848">
    <property type="term" value="F:hydroxyapatite binding"/>
    <property type="evidence" value="ECO:0000314"/>
    <property type="project" value="MGI"/>
</dbReference>
<dbReference type="GO" id="GO:0008147">
    <property type="term" value="F:structural constituent of bone"/>
    <property type="evidence" value="ECO:0000315"/>
    <property type="project" value="UniProtKB"/>
</dbReference>
<dbReference type="GO" id="GO:0031214">
    <property type="term" value="P:biomineral tissue development"/>
    <property type="evidence" value="ECO:0007669"/>
    <property type="project" value="UniProtKB-KW"/>
</dbReference>
<dbReference type="GO" id="GO:0060348">
    <property type="term" value="P:bone development"/>
    <property type="evidence" value="ECO:0007669"/>
    <property type="project" value="InterPro"/>
</dbReference>
<dbReference type="GO" id="GO:0007420">
    <property type="term" value="P:brain development"/>
    <property type="evidence" value="ECO:0000315"/>
    <property type="project" value="UniProtKB"/>
</dbReference>
<dbReference type="GO" id="GO:0032869">
    <property type="term" value="P:cellular response to insulin stimulus"/>
    <property type="evidence" value="ECO:0000315"/>
    <property type="project" value="UniProtKB"/>
</dbReference>
<dbReference type="GO" id="GO:0050890">
    <property type="term" value="P:cognition"/>
    <property type="evidence" value="ECO:0000315"/>
    <property type="project" value="UniProtKB"/>
</dbReference>
<dbReference type="GO" id="GO:0042593">
    <property type="term" value="P:glucose homeostasis"/>
    <property type="evidence" value="ECO:0000315"/>
    <property type="project" value="UniProtKB"/>
</dbReference>
<dbReference type="GO" id="GO:0007611">
    <property type="term" value="P:learning or memory"/>
    <property type="evidence" value="ECO:0000315"/>
    <property type="project" value="UniProtKB"/>
</dbReference>
<dbReference type="GO" id="GO:0016042">
    <property type="term" value="P:lipid catabolic process"/>
    <property type="evidence" value="ECO:0000315"/>
    <property type="project" value="MGI"/>
</dbReference>
<dbReference type="GO" id="GO:1903011">
    <property type="term" value="P:negative regulation of bone development"/>
    <property type="evidence" value="ECO:0000315"/>
    <property type="project" value="UniProtKB"/>
</dbReference>
<dbReference type="GO" id="GO:0031016">
    <property type="term" value="P:pancreas development"/>
    <property type="evidence" value="ECO:0000315"/>
    <property type="project" value="MGI"/>
</dbReference>
<dbReference type="GO" id="GO:0032024">
    <property type="term" value="P:positive regulation of insulin secretion"/>
    <property type="evidence" value="ECO:0000315"/>
    <property type="project" value="MGI"/>
</dbReference>
<dbReference type="GO" id="GO:0001956">
    <property type="term" value="P:positive regulation of neurotransmitter secretion"/>
    <property type="evidence" value="ECO:0000315"/>
    <property type="project" value="UniProtKB"/>
</dbReference>
<dbReference type="GO" id="GO:0030500">
    <property type="term" value="P:regulation of bone mineralization"/>
    <property type="evidence" value="ECO:0007669"/>
    <property type="project" value="InterPro"/>
</dbReference>
<dbReference type="GO" id="GO:1900076">
    <property type="term" value="P:regulation of cellular response to insulin stimulus"/>
    <property type="evidence" value="ECO:0007669"/>
    <property type="project" value="InterPro"/>
</dbReference>
<dbReference type="GO" id="GO:2000224">
    <property type="term" value="P:regulation of testosterone biosynthetic process"/>
    <property type="evidence" value="ECO:0000315"/>
    <property type="project" value="UniProtKB"/>
</dbReference>
<dbReference type="GO" id="GO:0032571">
    <property type="term" value="P:response to vitamin K"/>
    <property type="evidence" value="ECO:0007669"/>
    <property type="project" value="InterPro"/>
</dbReference>
<dbReference type="GO" id="GO:0044342">
    <property type="term" value="P:type B pancreatic cell proliferation"/>
    <property type="evidence" value="ECO:0000315"/>
    <property type="project" value="UniProtKB"/>
</dbReference>
<dbReference type="InterPro" id="IPR035972">
    <property type="entry name" value="GLA-like_dom_SF"/>
</dbReference>
<dbReference type="InterPro" id="IPR000294">
    <property type="entry name" value="GLA_domain"/>
</dbReference>
<dbReference type="InterPro" id="IPR039176">
    <property type="entry name" value="Osteocalcin"/>
</dbReference>
<dbReference type="InterPro" id="IPR002384">
    <property type="entry name" value="Osteocalcin/MGP"/>
</dbReference>
<dbReference type="PANTHER" id="PTHR14235">
    <property type="entry name" value="OSTEOCALCIN"/>
    <property type="match status" value="1"/>
</dbReference>
<dbReference type="PANTHER" id="PTHR14235:SF0">
    <property type="entry name" value="OSTEOCALCIN"/>
    <property type="match status" value="1"/>
</dbReference>
<dbReference type="PRINTS" id="PR00002">
    <property type="entry name" value="GLABONE"/>
</dbReference>
<dbReference type="SMART" id="SM00069">
    <property type="entry name" value="GLA"/>
    <property type="match status" value="1"/>
</dbReference>
<dbReference type="SUPFAM" id="SSF57630">
    <property type="entry name" value="GLA-domain"/>
    <property type="match status" value="1"/>
</dbReference>
<dbReference type="PROSITE" id="PS00011">
    <property type="entry name" value="GLA_1"/>
    <property type="match status" value="1"/>
</dbReference>
<dbReference type="PROSITE" id="PS50998">
    <property type="entry name" value="GLA_2"/>
    <property type="match status" value="1"/>
</dbReference>
<protein>
    <recommendedName>
        <fullName>Osteocalcin-2</fullName>
        <shortName evidence="12">OG2</shortName>
    </recommendedName>
    <alternativeName>
        <fullName>Bone Gla protein 2</fullName>
        <shortName>BGP2</shortName>
    </alternativeName>
    <alternativeName>
        <fullName>Gamma-carboxyglutamic acid-containing protein 2</fullName>
    </alternativeName>
</protein>
<accession>P86547</accession>
<accession>P04641</accession>
<feature type="signal peptide" evidence="13">
    <location>
        <begin position="1"/>
        <end position="23"/>
    </location>
</feature>
<feature type="propeptide" id="PRO_0000395312" evidence="13">
    <location>
        <begin position="24"/>
        <end position="49"/>
    </location>
</feature>
<feature type="chain" id="PRO_0000395313" description="Osteocalcin-2">
    <location>
        <begin position="50"/>
        <end position="95"/>
    </location>
</feature>
<feature type="domain" description="Gla" evidence="3">
    <location>
        <begin position="46"/>
        <end position="92"/>
    </location>
</feature>
<feature type="binding site" evidence="1">
    <location>
        <position position="62"/>
    </location>
    <ligand>
        <name>Ca(2+)</name>
        <dbReference type="ChEBI" id="CHEBI:29108"/>
        <label>3</label>
    </ligand>
</feature>
<feature type="binding site" evidence="1">
    <location>
        <position position="66"/>
    </location>
    <ligand>
        <name>Ca(2+)</name>
        <dbReference type="ChEBI" id="CHEBI:29108"/>
        <label>2</label>
    </ligand>
</feature>
<feature type="binding site" evidence="1">
    <location>
        <position position="69"/>
    </location>
    <ligand>
        <name>Ca(2+)</name>
        <dbReference type="ChEBI" id="CHEBI:29108"/>
        <label>1</label>
    </ligand>
</feature>
<feature type="binding site" evidence="1">
    <location>
        <position position="69"/>
    </location>
    <ligand>
        <name>Ca(2+)</name>
        <dbReference type="ChEBI" id="CHEBI:29108"/>
        <label>2</label>
    </ligand>
</feature>
<feature type="binding site" evidence="1">
    <location>
        <position position="75"/>
    </location>
    <ligand>
        <name>Ca(2+)</name>
        <dbReference type="ChEBI" id="CHEBI:29108"/>
        <label>1</label>
    </ligand>
</feature>
<feature type="disulfide bond" evidence="3">
    <location>
        <begin position="68"/>
        <end position="74"/>
    </location>
</feature>
<feature type="sequence conflict" description="In Ref. 1; CAA27762." evidence="13" ref="1">
    <original>A</original>
    <variation>P</variation>
    <location>
        <position position="23"/>
    </location>
</feature>
<evidence type="ECO:0000250" key="1"/>
<evidence type="ECO:0000250" key="2">
    <source>
        <dbReference type="UniProtKB" id="P02818"/>
    </source>
</evidence>
<evidence type="ECO:0000255" key="3">
    <source>
        <dbReference type="PROSITE-ProRule" id="PRU00463"/>
    </source>
</evidence>
<evidence type="ECO:0000269" key="4">
    <source>
    </source>
</evidence>
<evidence type="ECO:0000269" key="5">
    <source>
    </source>
</evidence>
<evidence type="ECO:0000269" key="6">
    <source>
    </source>
</evidence>
<evidence type="ECO:0000269" key="7">
    <source>
    </source>
</evidence>
<evidence type="ECO:0000269" key="8">
    <source>
    </source>
</evidence>
<evidence type="ECO:0000269" key="9">
    <source>
    </source>
</evidence>
<evidence type="ECO:0000269" key="10">
    <source>
    </source>
</evidence>
<evidence type="ECO:0000269" key="11">
    <source>
    </source>
</evidence>
<evidence type="ECO:0000303" key="12">
    <source>
    </source>
</evidence>
<evidence type="ECO:0000305" key="13"/>
<keyword id="KW-0091">Biomineralization</keyword>
<keyword id="KW-0106">Calcium</keyword>
<keyword id="KW-0165">Cleavage on pair of basic residues</keyword>
<keyword id="KW-1015">Disulfide bond</keyword>
<keyword id="KW-0301">Gamma-carboxyglutamic acid</keyword>
<keyword id="KW-0372">Hormone</keyword>
<keyword id="KW-0479">Metal-binding</keyword>
<keyword id="KW-1185">Reference proteome</keyword>
<keyword id="KW-0964">Secreted</keyword>
<keyword id="KW-0732">Signal</keyword>
<proteinExistence type="evidence at protein level"/>
<sequence length="95" mass="10459">MRTLSLLTLLALAALCLSDLTDAKPSGPESDKAFMSKQEGNKVVNRLRRYLGASVPSPDPLEPTREQCELNPACDELSDQYGLKTAYKRIYGITI</sequence>
<name>OSTC2_MOUSE</name>